<organism>
    <name type="scientific">Streptococcus pyogenes serotype M6 (strain ATCC BAA-946 / MGAS10394)</name>
    <dbReference type="NCBI Taxonomy" id="286636"/>
    <lineage>
        <taxon>Bacteria</taxon>
        <taxon>Bacillati</taxon>
        <taxon>Bacillota</taxon>
        <taxon>Bacilli</taxon>
        <taxon>Lactobacillales</taxon>
        <taxon>Streptococcaceae</taxon>
        <taxon>Streptococcus</taxon>
    </lineage>
</organism>
<evidence type="ECO:0000255" key="1">
    <source>
        <dbReference type="HAMAP-Rule" id="MF_00130"/>
    </source>
</evidence>
<reference key="1">
    <citation type="journal article" date="2004" name="J. Infect. Dis.">
        <title>Progress toward characterization of the group A Streptococcus metagenome: complete genome sequence of a macrolide-resistant serotype M6 strain.</title>
        <authorList>
            <person name="Banks D.J."/>
            <person name="Porcella S.F."/>
            <person name="Barbian K.D."/>
            <person name="Beres S.B."/>
            <person name="Philips L.E."/>
            <person name="Voyich J.M."/>
            <person name="DeLeo F.R."/>
            <person name="Martin J.M."/>
            <person name="Somerville G.A."/>
            <person name="Musser J.M."/>
        </authorList>
    </citation>
    <scope>NUCLEOTIDE SEQUENCE [LARGE SCALE GENOMIC DNA]</scope>
    <source>
        <strain>ATCC BAA-946 / MGAS10394</strain>
    </source>
</reference>
<keyword id="KW-0963">Cytoplasm</keyword>
<keyword id="KW-0227">DNA damage</keyword>
<keyword id="KW-0233">DNA recombination</keyword>
<keyword id="KW-0234">DNA repair</keyword>
<keyword id="KW-0255">Endonuclease</keyword>
<keyword id="KW-0378">Hydrolase</keyword>
<keyword id="KW-0460">Magnesium</keyword>
<keyword id="KW-0479">Metal-binding</keyword>
<keyword id="KW-0540">Nuclease</keyword>
<feature type="chain" id="PRO_0000212316" description="Holliday junction resolvase RecU">
    <location>
        <begin position="1"/>
        <end position="202"/>
    </location>
</feature>
<feature type="binding site" evidence="1">
    <location>
        <position position="85"/>
    </location>
    <ligand>
        <name>Mg(2+)</name>
        <dbReference type="ChEBI" id="CHEBI:18420"/>
    </ligand>
</feature>
<feature type="binding site" evidence="1">
    <location>
        <position position="87"/>
    </location>
    <ligand>
        <name>Mg(2+)</name>
        <dbReference type="ChEBI" id="CHEBI:18420"/>
    </ligand>
</feature>
<feature type="binding site" evidence="1">
    <location>
        <position position="100"/>
    </location>
    <ligand>
        <name>Mg(2+)</name>
        <dbReference type="ChEBI" id="CHEBI:18420"/>
    </ligand>
</feature>
<feature type="binding site" evidence="1">
    <location>
        <position position="119"/>
    </location>
    <ligand>
        <name>Mg(2+)</name>
        <dbReference type="ChEBI" id="CHEBI:18420"/>
    </ligand>
</feature>
<feature type="site" description="Transition state stabilizer" evidence="1">
    <location>
        <position position="102"/>
    </location>
</feature>
<accession>Q5XAM8</accession>
<sequence length="202" mass="23357">MVNYPHNLIRQKVSSVQKQTKQNKVDFANRGMSFEAAINATNDYYLSRQIAVIHKKPTPVQIVKVDYPKRSRAKIVEAYFRQASTTDYCGVYKGHYVDFEAKETRQKTAMPMKNFHLHQIEHMACVLHQKGICFVLLHFSTLKETYYLPAQALISFYQIDNGSKSMPIDYIRKNGFKVAFGAFPQVPYLNIIEQNFLGGDYN</sequence>
<gene>
    <name evidence="1" type="primary">recU</name>
    <name type="ordered locus">M6_Spy1400</name>
</gene>
<dbReference type="EC" id="3.1.21.10" evidence="1"/>
<dbReference type="EMBL" id="CP000003">
    <property type="protein sequence ID" value="AAT87535.1"/>
    <property type="molecule type" value="Genomic_DNA"/>
</dbReference>
<dbReference type="RefSeq" id="WP_002983622.1">
    <property type="nucleotide sequence ID" value="NC_006086.1"/>
</dbReference>
<dbReference type="SMR" id="Q5XAM8"/>
<dbReference type="GeneID" id="69900483"/>
<dbReference type="KEGG" id="spa:M6_Spy1400"/>
<dbReference type="HOGENOM" id="CLU_096340_0_0_9"/>
<dbReference type="Proteomes" id="UP000001167">
    <property type="component" value="Chromosome"/>
</dbReference>
<dbReference type="GO" id="GO:0005737">
    <property type="term" value="C:cytoplasm"/>
    <property type="evidence" value="ECO:0007669"/>
    <property type="project" value="UniProtKB-SubCell"/>
</dbReference>
<dbReference type="GO" id="GO:0004519">
    <property type="term" value="F:endonuclease activity"/>
    <property type="evidence" value="ECO:0007669"/>
    <property type="project" value="UniProtKB-UniRule"/>
</dbReference>
<dbReference type="GO" id="GO:0000287">
    <property type="term" value="F:magnesium ion binding"/>
    <property type="evidence" value="ECO:0007669"/>
    <property type="project" value="UniProtKB-UniRule"/>
</dbReference>
<dbReference type="GO" id="GO:0003676">
    <property type="term" value="F:nucleic acid binding"/>
    <property type="evidence" value="ECO:0007669"/>
    <property type="project" value="InterPro"/>
</dbReference>
<dbReference type="GO" id="GO:0007059">
    <property type="term" value="P:chromosome segregation"/>
    <property type="evidence" value="ECO:0007669"/>
    <property type="project" value="UniProtKB-UniRule"/>
</dbReference>
<dbReference type="GO" id="GO:0006310">
    <property type="term" value="P:DNA recombination"/>
    <property type="evidence" value="ECO:0007669"/>
    <property type="project" value="UniProtKB-UniRule"/>
</dbReference>
<dbReference type="GO" id="GO:0006281">
    <property type="term" value="P:DNA repair"/>
    <property type="evidence" value="ECO:0007669"/>
    <property type="project" value="UniProtKB-UniRule"/>
</dbReference>
<dbReference type="CDD" id="cd22354">
    <property type="entry name" value="RecU-like"/>
    <property type="match status" value="1"/>
</dbReference>
<dbReference type="Gene3D" id="3.40.1350.10">
    <property type="match status" value="1"/>
</dbReference>
<dbReference type="HAMAP" id="MF_00130">
    <property type="entry name" value="RecU"/>
    <property type="match status" value="1"/>
</dbReference>
<dbReference type="InterPro" id="IPR004612">
    <property type="entry name" value="Resolv_RecU"/>
</dbReference>
<dbReference type="InterPro" id="IPR011335">
    <property type="entry name" value="Restrct_endonuc-II-like"/>
</dbReference>
<dbReference type="InterPro" id="IPR011856">
    <property type="entry name" value="tRNA_endonuc-like_dom_sf"/>
</dbReference>
<dbReference type="NCBIfam" id="NF002580">
    <property type="entry name" value="PRK02234.1-1"/>
    <property type="match status" value="1"/>
</dbReference>
<dbReference type="NCBIfam" id="NF002584">
    <property type="entry name" value="PRK02234.1-5"/>
    <property type="match status" value="1"/>
</dbReference>
<dbReference type="NCBIfam" id="TIGR00648">
    <property type="entry name" value="recU"/>
    <property type="match status" value="1"/>
</dbReference>
<dbReference type="Pfam" id="PF03838">
    <property type="entry name" value="RecU"/>
    <property type="match status" value="1"/>
</dbReference>
<dbReference type="PIRSF" id="PIRSF037785">
    <property type="entry name" value="RecU"/>
    <property type="match status" value="1"/>
</dbReference>
<dbReference type="SUPFAM" id="SSF52980">
    <property type="entry name" value="Restriction endonuclease-like"/>
    <property type="match status" value="1"/>
</dbReference>
<protein>
    <recommendedName>
        <fullName evidence="1">Holliday junction resolvase RecU</fullName>
        <ecNumber evidence="1">3.1.21.10</ecNumber>
    </recommendedName>
    <alternativeName>
        <fullName evidence="1">Recombination protein U homolog</fullName>
    </alternativeName>
</protein>
<proteinExistence type="inferred from homology"/>
<comment type="function">
    <text evidence="1">Endonuclease that resolves Holliday junction intermediates in genetic recombination. Cleaves mobile four-strand junctions by introducing symmetrical nicks in paired strands. Promotes annealing of linear ssDNA with homologous dsDNA. Required for DNA repair, homologous recombination and chromosome segregation.</text>
</comment>
<comment type="catalytic activity">
    <reaction evidence="1">
        <text>Endonucleolytic cleavage at a junction such as a reciprocal single-stranded crossover between two homologous DNA duplexes (Holliday junction).</text>
        <dbReference type="EC" id="3.1.21.10"/>
    </reaction>
</comment>
<comment type="cofactor">
    <cofactor evidence="1">
        <name>Mg(2+)</name>
        <dbReference type="ChEBI" id="CHEBI:18420"/>
    </cofactor>
    <text evidence="1">Binds 1 Mg(2+) ion per subunit.</text>
</comment>
<comment type="subcellular location">
    <subcellularLocation>
        <location evidence="1">Cytoplasm</location>
    </subcellularLocation>
</comment>
<comment type="similarity">
    <text evidence="1">Belongs to the RecU family.</text>
</comment>
<name>RECU_STRP6</name>